<accession>Q3Z5H7</accession>
<protein>
    <recommendedName>
        <fullName evidence="1">Acyl-[acyl-carrier-protein]--UDP-N-acetylglucosamine O-acyltransferase</fullName>
        <shortName evidence="1">UDP-N-acetylglucosamine acyltransferase</shortName>
        <ecNumber evidence="1">2.3.1.129</ecNumber>
    </recommendedName>
</protein>
<gene>
    <name evidence="1" type="primary">lpxA</name>
    <name type="ordered locus">SSON_0193</name>
</gene>
<feature type="chain" id="PRO_0000302604" description="Acyl-[acyl-carrier-protein]--UDP-N-acetylglucosamine O-acyltransferase">
    <location>
        <begin position="1"/>
        <end position="262"/>
    </location>
</feature>
<proteinExistence type="inferred from homology"/>
<evidence type="ECO:0000255" key="1">
    <source>
        <dbReference type="HAMAP-Rule" id="MF_00387"/>
    </source>
</evidence>
<sequence length="262" mass="28080">MIDKSAFVHPTAIVEEGASIGANAHIGPFCIVGPHVEIGEGTVLKSHVVVNGHTKIGRDNEIYQFASIGEVNQDLKYAGEPTRVEIGDRNRIRESVTIHRGTVQGGGLTKVGSDNLLMINAHIAHDCTVGNRCILANNATLAGHVSVDDFAIIGGMTAVHQFCIIGAHVMVGGCSGVAQDVPPYVIAQGNHATPFGVNIEGLKRRGFSREAITAIRNAYKLIYRSGKTLDEVKPEIAELAETYPEVKAFTDFFARSTRGLIR</sequence>
<comment type="function">
    <text evidence="1">Involved in the biosynthesis of lipid A, a phosphorylated glycolipid that anchors the lipopolysaccharide to the outer membrane of the cell.</text>
</comment>
<comment type="catalytic activity">
    <reaction evidence="1">
        <text>a (3R)-hydroxyacyl-[ACP] + UDP-N-acetyl-alpha-D-glucosamine = a UDP-3-O-[(3R)-3-hydroxyacyl]-N-acetyl-alpha-D-glucosamine + holo-[ACP]</text>
        <dbReference type="Rhea" id="RHEA:67812"/>
        <dbReference type="Rhea" id="RHEA-COMP:9685"/>
        <dbReference type="Rhea" id="RHEA-COMP:9945"/>
        <dbReference type="ChEBI" id="CHEBI:57705"/>
        <dbReference type="ChEBI" id="CHEBI:64479"/>
        <dbReference type="ChEBI" id="CHEBI:78827"/>
        <dbReference type="ChEBI" id="CHEBI:173225"/>
        <dbReference type="EC" id="2.3.1.129"/>
    </reaction>
</comment>
<comment type="pathway">
    <text evidence="1">Glycolipid biosynthesis; lipid IV(A) biosynthesis; lipid IV(A) from (3R)-3-hydroxytetradecanoyl-[acyl-carrier-protein] and UDP-N-acetyl-alpha-D-glucosamine: step 1/6.</text>
</comment>
<comment type="subunit">
    <text evidence="1">Homotrimer.</text>
</comment>
<comment type="subcellular location">
    <subcellularLocation>
        <location evidence="1">Cytoplasm</location>
    </subcellularLocation>
</comment>
<comment type="similarity">
    <text evidence="1">Belongs to the transferase hexapeptide repeat family. LpxA subfamily.</text>
</comment>
<name>LPXA_SHISS</name>
<reference key="1">
    <citation type="journal article" date="2005" name="Nucleic Acids Res.">
        <title>Genome dynamics and diversity of Shigella species, the etiologic agents of bacillary dysentery.</title>
        <authorList>
            <person name="Yang F."/>
            <person name="Yang J."/>
            <person name="Zhang X."/>
            <person name="Chen L."/>
            <person name="Jiang Y."/>
            <person name="Yan Y."/>
            <person name="Tang X."/>
            <person name="Wang J."/>
            <person name="Xiong Z."/>
            <person name="Dong J."/>
            <person name="Xue Y."/>
            <person name="Zhu Y."/>
            <person name="Xu X."/>
            <person name="Sun L."/>
            <person name="Chen S."/>
            <person name="Nie H."/>
            <person name="Peng J."/>
            <person name="Xu J."/>
            <person name="Wang Y."/>
            <person name="Yuan Z."/>
            <person name="Wen Y."/>
            <person name="Yao Z."/>
            <person name="Shen Y."/>
            <person name="Qiang B."/>
            <person name="Hou Y."/>
            <person name="Yu J."/>
            <person name="Jin Q."/>
        </authorList>
    </citation>
    <scope>NUCLEOTIDE SEQUENCE [LARGE SCALE GENOMIC DNA]</scope>
    <source>
        <strain>Ss046</strain>
    </source>
</reference>
<dbReference type="EC" id="2.3.1.129" evidence="1"/>
<dbReference type="EMBL" id="CP000038">
    <property type="protein sequence ID" value="AAZ86985.1"/>
    <property type="molecule type" value="Genomic_DNA"/>
</dbReference>
<dbReference type="RefSeq" id="WP_000565966.1">
    <property type="nucleotide sequence ID" value="NC_007384.1"/>
</dbReference>
<dbReference type="SMR" id="Q3Z5H7"/>
<dbReference type="GeneID" id="93777244"/>
<dbReference type="KEGG" id="ssn:SSON_0193"/>
<dbReference type="HOGENOM" id="CLU_061249_0_0_6"/>
<dbReference type="UniPathway" id="UPA00359">
    <property type="reaction ID" value="UER00477"/>
</dbReference>
<dbReference type="Proteomes" id="UP000002529">
    <property type="component" value="Chromosome"/>
</dbReference>
<dbReference type="GO" id="GO:0005737">
    <property type="term" value="C:cytoplasm"/>
    <property type="evidence" value="ECO:0007669"/>
    <property type="project" value="UniProtKB-SubCell"/>
</dbReference>
<dbReference type="GO" id="GO:0016020">
    <property type="term" value="C:membrane"/>
    <property type="evidence" value="ECO:0007669"/>
    <property type="project" value="GOC"/>
</dbReference>
<dbReference type="GO" id="GO:0008780">
    <property type="term" value="F:acyl-[acyl-carrier-protein]-UDP-N-acetylglucosamine O-acyltransferase activity"/>
    <property type="evidence" value="ECO:0007669"/>
    <property type="project" value="UniProtKB-UniRule"/>
</dbReference>
<dbReference type="GO" id="GO:0009245">
    <property type="term" value="P:lipid A biosynthetic process"/>
    <property type="evidence" value="ECO:0007669"/>
    <property type="project" value="UniProtKB-UniRule"/>
</dbReference>
<dbReference type="CDD" id="cd03351">
    <property type="entry name" value="LbH_UDP-GlcNAc_AT"/>
    <property type="match status" value="1"/>
</dbReference>
<dbReference type="FunFam" id="1.20.1180.10:FF:000001">
    <property type="entry name" value="Acyl-[acyl-carrier-protein]--UDP-N-acetylglucosamine O-acyltransferase"/>
    <property type="match status" value="1"/>
</dbReference>
<dbReference type="FunFam" id="2.160.10.10:FF:000003">
    <property type="entry name" value="Acyl-[acyl-carrier-protein]--UDP-N-acetylglucosamine O-acyltransferase"/>
    <property type="match status" value="1"/>
</dbReference>
<dbReference type="Gene3D" id="2.160.10.10">
    <property type="entry name" value="Hexapeptide repeat proteins"/>
    <property type="match status" value="1"/>
</dbReference>
<dbReference type="Gene3D" id="1.20.1180.10">
    <property type="entry name" value="Udp N-acetylglucosamine O-acyltransferase, C-terminal domain"/>
    <property type="match status" value="1"/>
</dbReference>
<dbReference type="HAMAP" id="MF_00387">
    <property type="entry name" value="LpxA"/>
    <property type="match status" value="1"/>
</dbReference>
<dbReference type="InterPro" id="IPR029098">
    <property type="entry name" value="Acetyltransf_C"/>
</dbReference>
<dbReference type="InterPro" id="IPR037157">
    <property type="entry name" value="Acetyltransf_C_sf"/>
</dbReference>
<dbReference type="InterPro" id="IPR001451">
    <property type="entry name" value="Hexapep"/>
</dbReference>
<dbReference type="InterPro" id="IPR018357">
    <property type="entry name" value="Hexapep_transf_CS"/>
</dbReference>
<dbReference type="InterPro" id="IPR010137">
    <property type="entry name" value="Lipid_A_LpxA"/>
</dbReference>
<dbReference type="InterPro" id="IPR011004">
    <property type="entry name" value="Trimer_LpxA-like_sf"/>
</dbReference>
<dbReference type="NCBIfam" id="TIGR01852">
    <property type="entry name" value="lipid_A_lpxA"/>
    <property type="match status" value="1"/>
</dbReference>
<dbReference type="NCBIfam" id="NF003657">
    <property type="entry name" value="PRK05289.1"/>
    <property type="match status" value="1"/>
</dbReference>
<dbReference type="PANTHER" id="PTHR43480">
    <property type="entry name" value="ACYL-[ACYL-CARRIER-PROTEIN]--UDP-N-ACETYLGLUCOSAMINE O-ACYLTRANSFERASE"/>
    <property type="match status" value="1"/>
</dbReference>
<dbReference type="PANTHER" id="PTHR43480:SF1">
    <property type="entry name" value="ACYL-[ACYL-CARRIER-PROTEIN]--UDP-N-ACETYLGLUCOSAMINE O-ACYLTRANSFERASE, MITOCHONDRIAL-RELATED"/>
    <property type="match status" value="1"/>
</dbReference>
<dbReference type="Pfam" id="PF13720">
    <property type="entry name" value="Acetyltransf_11"/>
    <property type="match status" value="1"/>
</dbReference>
<dbReference type="Pfam" id="PF00132">
    <property type="entry name" value="Hexapep"/>
    <property type="match status" value="2"/>
</dbReference>
<dbReference type="PIRSF" id="PIRSF000456">
    <property type="entry name" value="UDP-GlcNAc_acltr"/>
    <property type="match status" value="1"/>
</dbReference>
<dbReference type="SUPFAM" id="SSF51161">
    <property type="entry name" value="Trimeric LpxA-like enzymes"/>
    <property type="match status" value="1"/>
</dbReference>
<dbReference type="PROSITE" id="PS00101">
    <property type="entry name" value="HEXAPEP_TRANSFERASES"/>
    <property type="match status" value="2"/>
</dbReference>
<organism>
    <name type="scientific">Shigella sonnei (strain Ss046)</name>
    <dbReference type="NCBI Taxonomy" id="300269"/>
    <lineage>
        <taxon>Bacteria</taxon>
        <taxon>Pseudomonadati</taxon>
        <taxon>Pseudomonadota</taxon>
        <taxon>Gammaproteobacteria</taxon>
        <taxon>Enterobacterales</taxon>
        <taxon>Enterobacteriaceae</taxon>
        <taxon>Shigella</taxon>
    </lineage>
</organism>
<keyword id="KW-0012">Acyltransferase</keyword>
<keyword id="KW-0963">Cytoplasm</keyword>
<keyword id="KW-0441">Lipid A biosynthesis</keyword>
<keyword id="KW-0444">Lipid biosynthesis</keyword>
<keyword id="KW-0443">Lipid metabolism</keyword>
<keyword id="KW-1185">Reference proteome</keyword>
<keyword id="KW-0677">Repeat</keyword>
<keyword id="KW-0808">Transferase</keyword>